<gene>
    <name type="primary">RH20</name>
    <name type="ordered locus">At1g55150</name>
    <name type="ORF">T7N22.9</name>
</gene>
<evidence type="ECO:0000250" key="1"/>
<evidence type="ECO:0000255" key="2">
    <source>
        <dbReference type="PROSITE-ProRule" id="PRU00541"/>
    </source>
</evidence>
<evidence type="ECO:0000255" key="3">
    <source>
        <dbReference type="PROSITE-ProRule" id="PRU00542"/>
    </source>
</evidence>
<evidence type="ECO:0000256" key="4">
    <source>
        <dbReference type="SAM" id="MobiDB-lite"/>
    </source>
</evidence>
<evidence type="ECO:0000305" key="5"/>
<keyword id="KW-0067">ATP-binding</keyword>
<keyword id="KW-0347">Helicase</keyword>
<keyword id="KW-0378">Hydrolase</keyword>
<keyword id="KW-0866">Nonsense-mediated mRNA decay</keyword>
<keyword id="KW-0547">Nucleotide-binding</keyword>
<keyword id="KW-0539">Nucleus</keyword>
<keyword id="KW-1185">Reference proteome</keyword>
<keyword id="KW-0690">Ribosome biogenesis</keyword>
<keyword id="KW-0694">RNA-binding</keyword>
<keyword id="KW-0698">rRNA processing</keyword>
<accession>Q9C718</accession>
<accession>Q9ZS02</accession>
<feature type="chain" id="PRO_0000239161" description="DEAD-box ATP-dependent RNA helicase 20">
    <location>
        <begin position="1"/>
        <end position="501"/>
    </location>
</feature>
<feature type="domain" description="Helicase ATP-binding" evidence="2">
    <location>
        <begin position="130"/>
        <end position="305"/>
    </location>
</feature>
<feature type="domain" description="Helicase C-terminal" evidence="3">
    <location>
        <begin position="333"/>
        <end position="478"/>
    </location>
</feature>
<feature type="region of interest" description="Disordered" evidence="4">
    <location>
        <begin position="1"/>
        <end position="53"/>
    </location>
</feature>
<feature type="region of interest" description="Disordered" evidence="4">
    <location>
        <begin position="473"/>
        <end position="501"/>
    </location>
</feature>
<feature type="short sequence motif" description="Q motif">
    <location>
        <begin position="99"/>
        <end position="127"/>
    </location>
</feature>
<feature type="short sequence motif" description="DEAD box">
    <location>
        <begin position="253"/>
        <end position="256"/>
    </location>
</feature>
<feature type="compositionally biased region" description="Basic and acidic residues" evidence="4">
    <location>
        <begin position="1"/>
        <end position="20"/>
    </location>
</feature>
<feature type="compositionally biased region" description="Basic and acidic residues" evidence="4">
    <location>
        <begin position="38"/>
        <end position="53"/>
    </location>
</feature>
<feature type="compositionally biased region" description="Basic and acidic residues" evidence="4">
    <location>
        <begin position="491"/>
        <end position="501"/>
    </location>
</feature>
<feature type="binding site" evidence="2">
    <location>
        <begin position="143"/>
        <end position="150"/>
    </location>
    <ligand>
        <name>ATP</name>
        <dbReference type="ChEBI" id="CHEBI:30616"/>
    </ligand>
</feature>
<name>RH20_ARATH</name>
<dbReference type="EC" id="3.6.4.13"/>
<dbReference type="EMBL" id="AC073944">
    <property type="protein sequence ID" value="AAG50841.1"/>
    <property type="molecule type" value="Genomic_DNA"/>
</dbReference>
<dbReference type="EMBL" id="CP002684">
    <property type="protein sequence ID" value="AEE33192.1"/>
    <property type="molecule type" value="Genomic_DNA"/>
</dbReference>
<dbReference type="EMBL" id="AY062745">
    <property type="protein sequence ID" value="AAL32823.1"/>
    <property type="molecule type" value="mRNA"/>
</dbReference>
<dbReference type="EMBL" id="AY128786">
    <property type="protein sequence ID" value="AAM91186.1"/>
    <property type="molecule type" value="mRNA"/>
</dbReference>
<dbReference type="EMBL" id="AJ010470">
    <property type="protein sequence ID" value="CAA09209.1"/>
    <property type="molecule type" value="mRNA"/>
</dbReference>
<dbReference type="PIR" id="B96593">
    <property type="entry name" value="B96593"/>
</dbReference>
<dbReference type="PIR" id="T51345">
    <property type="entry name" value="T51345"/>
</dbReference>
<dbReference type="RefSeq" id="NP_175911.1">
    <property type="nucleotide sequence ID" value="NM_104388.4"/>
</dbReference>
<dbReference type="SMR" id="Q9C718"/>
<dbReference type="BioGRID" id="27183">
    <property type="interactions" value="2"/>
</dbReference>
<dbReference type="FunCoup" id="Q9C718">
    <property type="interactions" value="4542"/>
</dbReference>
<dbReference type="STRING" id="3702.Q9C718"/>
<dbReference type="iPTMnet" id="Q9C718"/>
<dbReference type="MetOSite" id="Q9C718"/>
<dbReference type="PaxDb" id="3702-AT1G55150.1"/>
<dbReference type="ProteomicsDB" id="236926"/>
<dbReference type="EnsemblPlants" id="AT1G55150.1">
    <property type="protein sequence ID" value="AT1G55150.1"/>
    <property type="gene ID" value="AT1G55150"/>
</dbReference>
<dbReference type="GeneID" id="841958"/>
<dbReference type="Gramene" id="AT1G55150.1">
    <property type="protein sequence ID" value="AT1G55150.1"/>
    <property type="gene ID" value="AT1G55150"/>
</dbReference>
<dbReference type="KEGG" id="ath:AT1G55150"/>
<dbReference type="Araport" id="AT1G55150"/>
<dbReference type="TAIR" id="AT1G55150">
    <property type="gene designation" value="RH20"/>
</dbReference>
<dbReference type="eggNOG" id="KOG0331">
    <property type="taxonomic scope" value="Eukaryota"/>
</dbReference>
<dbReference type="HOGENOM" id="CLU_003041_16_9_1"/>
<dbReference type="InParanoid" id="Q9C718"/>
<dbReference type="OMA" id="STMPKFE"/>
<dbReference type="OrthoDB" id="196131at2759"/>
<dbReference type="PhylomeDB" id="Q9C718"/>
<dbReference type="BioCyc" id="ARA:AT1G35250-MONOMER"/>
<dbReference type="CD-CODE" id="4299E36E">
    <property type="entry name" value="Nucleolus"/>
</dbReference>
<dbReference type="PRO" id="PR:Q9C718"/>
<dbReference type="Proteomes" id="UP000006548">
    <property type="component" value="Chromosome 1"/>
</dbReference>
<dbReference type="ExpressionAtlas" id="Q9C718">
    <property type="expression patterns" value="baseline and differential"/>
</dbReference>
<dbReference type="GO" id="GO:0005634">
    <property type="term" value="C:nucleus"/>
    <property type="evidence" value="ECO:0007669"/>
    <property type="project" value="UniProtKB-SubCell"/>
</dbReference>
<dbReference type="GO" id="GO:0005524">
    <property type="term" value="F:ATP binding"/>
    <property type="evidence" value="ECO:0007669"/>
    <property type="project" value="UniProtKB-KW"/>
</dbReference>
<dbReference type="GO" id="GO:0016887">
    <property type="term" value="F:ATP hydrolysis activity"/>
    <property type="evidence" value="ECO:0007669"/>
    <property type="project" value="RHEA"/>
</dbReference>
<dbReference type="GO" id="GO:0003723">
    <property type="term" value="F:RNA binding"/>
    <property type="evidence" value="ECO:0007669"/>
    <property type="project" value="UniProtKB-KW"/>
</dbReference>
<dbReference type="GO" id="GO:0003724">
    <property type="term" value="F:RNA helicase activity"/>
    <property type="evidence" value="ECO:0007669"/>
    <property type="project" value="UniProtKB-EC"/>
</dbReference>
<dbReference type="GO" id="GO:0000184">
    <property type="term" value="P:nuclear-transcribed mRNA catabolic process, nonsense-mediated decay"/>
    <property type="evidence" value="ECO:0007669"/>
    <property type="project" value="UniProtKB-KW"/>
</dbReference>
<dbReference type="GO" id="GO:0006364">
    <property type="term" value="P:rRNA processing"/>
    <property type="evidence" value="ECO:0007669"/>
    <property type="project" value="UniProtKB-KW"/>
</dbReference>
<dbReference type="CDD" id="cd17966">
    <property type="entry name" value="DEADc_DDX5_DDX17"/>
    <property type="match status" value="1"/>
</dbReference>
<dbReference type="CDD" id="cd18787">
    <property type="entry name" value="SF2_C_DEAD"/>
    <property type="match status" value="1"/>
</dbReference>
<dbReference type="FunFam" id="3.40.50.300:FF:000008">
    <property type="entry name" value="ATP-dependent RNA helicase RhlB"/>
    <property type="match status" value="1"/>
</dbReference>
<dbReference type="FunFam" id="3.40.50.300:FF:000079">
    <property type="entry name" value="probable ATP-dependent RNA helicase DDX17"/>
    <property type="match status" value="1"/>
</dbReference>
<dbReference type="Gene3D" id="3.40.50.300">
    <property type="entry name" value="P-loop containing nucleotide triphosphate hydrolases"/>
    <property type="match status" value="2"/>
</dbReference>
<dbReference type="InterPro" id="IPR011545">
    <property type="entry name" value="DEAD/DEAH_box_helicase_dom"/>
</dbReference>
<dbReference type="InterPro" id="IPR014001">
    <property type="entry name" value="Helicase_ATP-bd"/>
</dbReference>
<dbReference type="InterPro" id="IPR001650">
    <property type="entry name" value="Helicase_C-like"/>
</dbReference>
<dbReference type="InterPro" id="IPR027417">
    <property type="entry name" value="P-loop_NTPase"/>
</dbReference>
<dbReference type="InterPro" id="IPR000629">
    <property type="entry name" value="RNA-helicase_DEAD-box_CS"/>
</dbReference>
<dbReference type="InterPro" id="IPR014014">
    <property type="entry name" value="RNA_helicase_DEAD_Q_motif"/>
</dbReference>
<dbReference type="PANTHER" id="PTHR47958">
    <property type="entry name" value="ATP-DEPENDENT RNA HELICASE DBP3"/>
    <property type="match status" value="1"/>
</dbReference>
<dbReference type="Pfam" id="PF00270">
    <property type="entry name" value="DEAD"/>
    <property type="match status" value="1"/>
</dbReference>
<dbReference type="Pfam" id="PF00271">
    <property type="entry name" value="Helicase_C"/>
    <property type="match status" value="1"/>
</dbReference>
<dbReference type="SMART" id="SM00487">
    <property type="entry name" value="DEXDc"/>
    <property type="match status" value="1"/>
</dbReference>
<dbReference type="SMART" id="SM00490">
    <property type="entry name" value="HELICc"/>
    <property type="match status" value="1"/>
</dbReference>
<dbReference type="SUPFAM" id="SSF52540">
    <property type="entry name" value="P-loop containing nucleoside triphosphate hydrolases"/>
    <property type="match status" value="1"/>
</dbReference>
<dbReference type="PROSITE" id="PS00039">
    <property type="entry name" value="DEAD_ATP_HELICASE"/>
    <property type="match status" value="1"/>
</dbReference>
<dbReference type="PROSITE" id="PS51192">
    <property type="entry name" value="HELICASE_ATP_BIND_1"/>
    <property type="match status" value="1"/>
</dbReference>
<dbReference type="PROSITE" id="PS51194">
    <property type="entry name" value="HELICASE_CTER"/>
    <property type="match status" value="1"/>
</dbReference>
<dbReference type="PROSITE" id="PS51195">
    <property type="entry name" value="Q_MOTIF"/>
    <property type="match status" value="1"/>
</dbReference>
<comment type="function">
    <text evidence="1">ATP-dependent RNA helicase involved nonsense-mediated mRNA decay and ribosome biogenesis through rRNA processing.</text>
</comment>
<comment type="catalytic activity">
    <reaction>
        <text>ATP + H2O = ADP + phosphate + H(+)</text>
        <dbReference type="Rhea" id="RHEA:13065"/>
        <dbReference type="ChEBI" id="CHEBI:15377"/>
        <dbReference type="ChEBI" id="CHEBI:15378"/>
        <dbReference type="ChEBI" id="CHEBI:30616"/>
        <dbReference type="ChEBI" id="CHEBI:43474"/>
        <dbReference type="ChEBI" id="CHEBI:456216"/>
        <dbReference type="EC" id="3.6.4.13"/>
    </reaction>
</comment>
<comment type="subcellular location">
    <subcellularLocation>
        <location evidence="1">Nucleus</location>
    </subcellularLocation>
</comment>
<comment type="domain">
    <text>The Q motif is unique to and characteristic of the DEAD box family of RNA helicases and controls ATP binding and hydrolysis.</text>
</comment>
<comment type="similarity">
    <text evidence="5">Belongs to the DEAD box helicase family. DDX5/DBP2 subfamily.</text>
</comment>
<protein>
    <recommendedName>
        <fullName>DEAD-box ATP-dependent RNA helicase 20</fullName>
        <ecNumber>3.6.4.13</ecNumber>
    </recommendedName>
</protein>
<reference key="1">
    <citation type="journal article" date="2000" name="Nature">
        <title>Sequence and analysis of chromosome 1 of the plant Arabidopsis thaliana.</title>
        <authorList>
            <person name="Theologis A."/>
            <person name="Ecker J.R."/>
            <person name="Palm C.J."/>
            <person name="Federspiel N.A."/>
            <person name="Kaul S."/>
            <person name="White O."/>
            <person name="Alonso J."/>
            <person name="Altafi H."/>
            <person name="Araujo R."/>
            <person name="Bowman C.L."/>
            <person name="Brooks S.Y."/>
            <person name="Buehler E."/>
            <person name="Chan A."/>
            <person name="Chao Q."/>
            <person name="Chen H."/>
            <person name="Cheuk R.F."/>
            <person name="Chin C.W."/>
            <person name="Chung M.K."/>
            <person name="Conn L."/>
            <person name="Conway A.B."/>
            <person name="Conway A.R."/>
            <person name="Creasy T.H."/>
            <person name="Dewar K."/>
            <person name="Dunn P."/>
            <person name="Etgu P."/>
            <person name="Feldblyum T.V."/>
            <person name="Feng J.-D."/>
            <person name="Fong B."/>
            <person name="Fujii C.Y."/>
            <person name="Gill J.E."/>
            <person name="Goldsmith A.D."/>
            <person name="Haas B."/>
            <person name="Hansen N.F."/>
            <person name="Hughes B."/>
            <person name="Huizar L."/>
            <person name="Hunter J.L."/>
            <person name="Jenkins J."/>
            <person name="Johnson-Hopson C."/>
            <person name="Khan S."/>
            <person name="Khaykin E."/>
            <person name="Kim C.J."/>
            <person name="Koo H.L."/>
            <person name="Kremenetskaia I."/>
            <person name="Kurtz D.B."/>
            <person name="Kwan A."/>
            <person name="Lam B."/>
            <person name="Langin-Hooper S."/>
            <person name="Lee A."/>
            <person name="Lee J.M."/>
            <person name="Lenz C.A."/>
            <person name="Li J.H."/>
            <person name="Li Y.-P."/>
            <person name="Lin X."/>
            <person name="Liu S.X."/>
            <person name="Liu Z.A."/>
            <person name="Luros J.S."/>
            <person name="Maiti R."/>
            <person name="Marziali A."/>
            <person name="Militscher J."/>
            <person name="Miranda M."/>
            <person name="Nguyen M."/>
            <person name="Nierman W.C."/>
            <person name="Osborne B.I."/>
            <person name="Pai G."/>
            <person name="Peterson J."/>
            <person name="Pham P.K."/>
            <person name="Rizzo M."/>
            <person name="Rooney T."/>
            <person name="Rowley D."/>
            <person name="Sakano H."/>
            <person name="Salzberg S.L."/>
            <person name="Schwartz J.R."/>
            <person name="Shinn P."/>
            <person name="Southwick A.M."/>
            <person name="Sun H."/>
            <person name="Tallon L.J."/>
            <person name="Tambunga G."/>
            <person name="Toriumi M.J."/>
            <person name="Town C.D."/>
            <person name="Utterback T."/>
            <person name="Van Aken S."/>
            <person name="Vaysberg M."/>
            <person name="Vysotskaia V.S."/>
            <person name="Walker M."/>
            <person name="Wu D."/>
            <person name="Yu G."/>
            <person name="Fraser C.M."/>
            <person name="Venter J.C."/>
            <person name="Davis R.W."/>
        </authorList>
    </citation>
    <scope>NUCLEOTIDE SEQUENCE [LARGE SCALE GENOMIC DNA]</scope>
    <source>
        <strain>cv. Columbia</strain>
    </source>
</reference>
<reference key="2">
    <citation type="journal article" date="2017" name="Plant J.">
        <title>Araport11: a complete reannotation of the Arabidopsis thaliana reference genome.</title>
        <authorList>
            <person name="Cheng C.Y."/>
            <person name="Krishnakumar V."/>
            <person name="Chan A.P."/>
            <person name="Thibaud-Nissen F."/>
            <person name="Schobel S."/>
            <person name="Town C.D."/>
        </authorList>
    </citation>
    <scope>GENOME REANNOTATION</scope>
    <source>
        <strain>cv. Columbia</strain>
    </source>
</reference>
<reference key="3">
    <citation type="journal article" date="2003" name="Science">
        <title>Empirical analysis of transcriptional activity in the Arabidopsis genome.</title>
        <authorList>
            <person name="Yamada K."/>
            <person name="Lim J."/>
            <person name="Dale J.M."/>
            <person name="Chen H."/>
            <person name="Shinn P."/>
            <person name="Palm C.J."/>
            <person name="Southwick A.M."/>
            <person name="Wu H.C."/>
            <person name="Kim C.J."/>
            <person name="Nguyen M."/>
            <person name="Pham P.K."/>
            <person name="Cheuk R.F."/>
            <person name="Karlin-Newmann G."/>
            <person name="Liu S.X."/>
            <person name="Lam B."/>
            <person name="Sakano H."/>
            <person name="Wu T."/>
            <person name="Yu G."/>
            <person name="Miranda M."/>
            <person name="Quach H.L."/>
            <person name="Tripp M."/>
            <person name="Chang C.H."/>
            <person name="Lee J.M."/>
            <person name="Toriumi M.J."/>
            <person name="Chan M.M."/>
            <person name="Tang C.C."/>
            <person name="Onodera C.S."/>
            <person name="Deng J.M."/>
            <person name="Akiyama K."/>
            <person name="Ansari Y."/>
            <person name="Arakawa T."/>
            <person name="Banh J."/>
            <person name="Banno F."/>
            <person name="Bowser L."/>
            <person name="Brooks S.Y."/>
            <person name="Carninci P."/>
            <person name="Chao Q."/>
            <person name="Choy N."/>
            <person name="Enju A."/>
            <person name="Goldsmith A.D."/>
            <person name="Gurjal M."/>
            <person name="Hansen N.F."/>
            <person name="Hayashizaki Y."/>
            <person name="Johnson-Hopson C."/>
            <person name="Hsuan V.W."/>
            <person name="Iida K."/>
            <person name="Karnes M."/>
            <person name="Khan S."/>
            <person name="Koesema E."/>
            <person name="Ishida J."/>
            <person name="Jiang P.X."/>
            <person name="Jones T."/>
            <person name="Kawai J."/>
            <person name="Kamiya A."/>
            <person name="Meyers C."/>
            <person name="Nakajima M."/>
            <person name="Narusaka M."/>
            <person name="Seki M."/>
            <person name="Sakurai T."/>
            <person name="Satou M."/>
            <person name="Tamse R."/>
            <person name="Vaysberg M."/>
            <person name="Wallender E.K."/>
            <person name="Wong C."/>
            <person name="Yamamura Y."/>
            <person name="Yuan S."/>
            <person name="Shinozaki K."/>
            <person name="Davis R.W."/>
            <person name="Theologis A."/>
            <person name="Ecker J.R."/>
        </authorList>
    </citation>
    <scope>NUCLEOTIDE SEQUENCE [LARGE SCALE MRNA]</scope>
    <source>
        <strain>cv. Columbia</strain>
    </source>
</reference>
<reference key="4">
    <citation type="journal article" date="1999" name="Nucleic Acids Res.">
        <title>The DEAD box RNA helicase family in Arabidopsis thaliana.</title>
        <authorList>
            <person name="Aubourg S."/>
            <person name="Kreis M."/>
            <person name="Lecharny A."/>
        </authorList>
    </citation>
    <scope>NUCLEOTIDE SEQUENCE [MRNA] OF 315-501</scope>
    <source>
        <strain>cv. Columbia</strain>
    </source>
</reference>
<reference key="5">
    <citation type="journal article" date="2004" name="Plant Biotechnol. J.">
        <title>DEAD-box RNA helicases in Arabidopsis thaliana: establishing a link between quantitative expression, gene structure and evolution of a family of genes.</title>
        <authorList>
            <person name="Mingam A."/>
            <person name="Toffano-Nioche C."/>
            <person name="Brunaud V."/>
            <person name="Boudet N."/>
            <person name="Kreis M."/>
            <person name="Lecharny A."/>
        </authorList>
    </citation>
    <scope>GENE FAMILY</scope>
    <scope>NOMENCLATURE</scope>
</reference>
<reference key="6">
    <citation type="journal article" date="2013" name="PLoS ONE">
        <title>Genome-wide comparative in silico analysis of the RNA helicase gene family in Zea mays and Glycine max: a comparison with Arabidopsis and Oryza sativa.</title>
        <authorList>
            <person name="Xu R."/>
            <person name="Zhang S."/>
            <person name="Huang J."/>
            <person name="Zheng C."/>
        </authorList>
    </citation>
    <scope>GENE FAMILY</scope>
</reference>
<sequence>MSRYDSRTGDSTSYRDRRSDSGFGGTSSYGSSGSHTSSKKDNDGNESPRKLDLDGLTPFEKNFYVESPAVAAMTDTEVEEYRKLREITVEGKDIPKPVKSFRDVGFPDYVLEEVKKAGFTEPTPIQSQGWPMAMKGRDLIGIAETGSGKTLSYLLPAIVHVNAQPMLAHGDGPIVLVLAPTRELAVQIQQEASKFGSSSKIKTTCIYGGVPKGPQVRDLQKGVEIVIATPGRLIDMMESNNTNLRRVTYLVLDEADRMLDMGFDPQIRKIVSHIRPDRQTLYWSATWPKEVEQLSKKFLYNPYKVIIGSSDLKANRAIRQIVDVISESQKYNKLVKLLEDIMDGSRILVFLDTKKGCDQITRQLRMDGWPALSIHGDKSQAERDWVLSEFRSGKSPIMTATDVAARGLDVKDVKYVINYDFPGSLEDYVHRIGRTGRAGAKGTAYTFFTVANARFAKELTNILQEAGQKVSPELASMGRSTAPPPPGLGGFRDRGSRRGWS</sequence>
<organism>
    <name type="scientific">Arabidopsis thaliana</name>
    <name type="common">Mouse-ear cress</name>
    <dbReference type="NCBI Taxonomy" id="3702"/>
    <lineage>
        <taxon>Eukaryota</taxon>
        <taxon>Viridiplantae</taxon>
        <taxon>Streptophyta</taxon>
        <taxon>Embryophyta</taxon>
        <taxon>Tracheophyta</taxon>
        <taxon>Spermatophyta</taxon>
        <taxon>Magnoliopsida</taxon>
        <taxon>eudicotyledons</taxon>
        <taxon>Gunneridae</taxon>
        <taxon>Pentapetalae</taxon>
        <taxon>rosids</taxon>
        <taxon>malvids</taxon>
        <taxon>Brassicales</taxon>
        <taxon>Brassicaceae</taxon>
        <taxon>Camelineae</taxon>
        <taxon>Arabidopsis</taxon>
    </lineage>
</organism>
<proteinExistence type="evidence at transcript level"/>